<feature type="chain" id="PRO_0000372066" description="Uncharacterized protein Z">
    <location>
        <begin position="1"/>
        <end position="64"/>
    </location>
</feature>
<dbReference type="EMBL" id="AF306496">
    <property type="protein sequence ID" value="AAG45341.1"/>
    <property type="molecule type" value="Genomic_DNA"/>
</dbReference>
<dbReference type="RefSeq" id="NP_073539.1">
    <property type="nucleotide sequence ID" value="NC_002643.1"/>
</dbReference>
<dbReference type="KEGG" id="vg:918755"/>
<dbReference type="Proteomes" id="UP000002418">
    <property type="component" value="Genome"/>
</dbReference>
<sequence length="64" mass="7486">MGQLGKIQRSTRQPIGLNGLFDPNNHSTRWWLRKHVHLRSLRNSDTSCKSRDKCSTFQSLQSYL</sequence>
<accession>Q9G058</accession>
<organism>
    <name type="scientific">Bdellovibrio phage phiMH2K</name>
    <name type="common">Bacteriophage phiMH2K</name>
    <dbReference type="NCBI Taxonomy" id="145579"/>
    <lineage>
        <taxon>Viruses</taxon>
        <taxon>Monodnaviria</taxon>
        <taxon>Sangervirae</taxon>
        <taxon>Phixviricota</taxon>
        <taxon>Malgrandaviricetes</taxon>
        <taxon>Petitvirales</taxon>
        <taxon>Microviridae</taxon>
        <taxon>Gokushovirinae</taxon>
        <taxon>Bdellomicrovirus</taxon>
        <taxon>Bdellomicrovirus MH2K</taxon>
    </lineage>
</organism>
<proteinExistence type="predicted"/>
<protein>
    <recommendedName>
        <fullName>Uncharacterized protein Z</fullName>
    </recommendedName>
</protein>
<keyword id="KW-1185">Reference proteome</keyword>
<name>Z_BPPHM</name>
<gene>
    <name type="ORF">ORFZ</name>
</gene>
<organismHost>
    <name type="scientific">Bdellovibrio bacteriovorus</name>
    <dbReference type="NCBI Taxonomy" id="959"/>
</organismHost>
<reference key="1">
    <citation type="journal article" date="2002" name="J. Bacteriol.">
        <title>Microviridae, a family divided: isolation, characterization, and genome sequence of phiMH2K, a bacteriophage of the obligate intracellular parasitic bacterium Bdellovibrio bacteriovorus.</title>
        <authorList>
            <person name="Brentlinger K.L."/>
            <person name="Hafenstein S."/>
            <person name="Novak C.R."/>
            <person name="Fane B.A."/>
            <person name="Borgon R."/>
            <person name="McKenna R."/>
            <person name="Agbandje-McKenna M."/>
        </authorList>
    </citation>
    <scope>NUCLEOTIDE SEQUENCE [GENOMIC DNA]</scope>
</reference>